<proteinExistence type="inferred from homology"/>
<gene>
    <name type="ordered locus">Lferr_0060</name>
</gene>
<protein>
    <recommendedName>
        <fullName evidence="1">Probable transcriptional regulatory protein Lferr_0060</fullName>
    </recommendedName>
</protein>
<reference key="1">
    <citation type="submission" date="2008-08" db="EMBL/GenBank/DDBJ databases">
        <title>Complete sequence of Acidithiobacillus ferrooxidans ATCC 53993.</title>
        <authorList>
            <person name="Lucas S."/>
            <person name="Copeland A."/>
            <person name="Lapidus A."/>
            <person name="Glavina del Rio T."/>
            <person name="Dalin E."/>
            <person name="Tice H."/>
            <person name="Bruce D."/>
            <person name="Goodwin L."/>
            <person name="Pitluck S."/>
            <person name="Sims D."/>
            <person name="Brettin T."/>
            <person name="Detter J.C."/>
            <person name="Han C."/>
            <person name="Kuske C.R."/>
            <person name="Larimer F."/>
            <person name="Land M."/>
            <person name="Hauser L."/>
            <person name="Kyrpides N."/>
            <person name="Lykidis A."/>
            <person name="Borole A.P."/>
        </authorList>
    </citation>
    <scope>NUCLEOTIDE SEQUENCE [LARGE SCALE GENOMIC DNA]</scope>
    <source>
        <strain>ATCC 53993 / BNL-5-31</strain>
    </source>
</reference>
<organism>
    <name type="scientific">Acidithiobacillus ferrooxidans (strain ATCC 53993 / BNL-5-31)</name>
    <name type="common">Leptospirillum ferrooxidans (ATCC 53993)</name>
    <dbReference type="NCBI Taxonomy" id="380394"/>
    <lineage>
        <taxon>Bacteria</taxon>
        <taxon>Pseudomonadati</taxon>
        <taxon>Pseudomonadota</taxon>
        <taxon>Acidithiobacillia</taxon>
        <taxon>Acidithiobacillales</taxon>
        <taxon>Acidithiobacillaceae</taxon>
        <taxon>Acidithiobacillus</taxon>
    </lineage>
</organism>
<evidence type="ECO:0000255" key="1">
    <source>
        <dbReference type="HAMAP-Rule" id="MF_00693"/>
    </source>
</evidence>
<comment type="subcellular location">
    <subcellularLocation>
        <location evidence="1">Cytoplasm</location>
    </subcellularLocation>
</comment>
<comment type="similarity">
    <text evidence="1">Belongs to the TACO1 family.</text>
</comment>
<keyword id="KW-0963">Cytoplasm</keyword>
<keyword id="KW-0238">DNA-binding</keyword>
<keyword id="KW-0804">Transcription</keyword>
<keyword id="KW-0805">Transcription regulation</keyword>
<name>Y060_ACIF5</name>
<feature type="chain" id="PRO_1000132142" description="Probable transcriptional regulatory protein Lferr_0060">
    <location>
        <begin position="1"/>
        <end position="250"/>
    </location>
</feature>
<dbReference type="EMBL" id="CP001132">
    <property type="protein sequence ID" value="ACH82322.1"/>
    <property type="molecule type" value="Genomic_DNA"/>
</dbReference>
<dbReference type="RefSeq" id="WP_009567690.1">
    <property type="nucleotide sequence ID" value="NC_011206.1"/>
</dbReference>
<dbReference type="SMR" id="B5EJL6"/>
<dbReference type="KEGG" id="afe:Lferr_0060"/>
<dbReference type="eggNOG" id="COG0217">
    <property type="taxonomic scope" value="Bacteria"/>
</dbReference>
<dbReference type="HOGENOM" id="CLU_062974_2_2_6"/>
<dbReference type="GO" id="GO:0005829">
    <property type="term" value="C:cytosol"/>
    <property type="evidence" value="ECO:0007669"/>
    <property type="project" value="TreeGrafter"/>
</dbReference>
<dbReference type="GO" id="GO:0003677">
    <property type="term" value="F:DNA binding"/>
    <property type="evidence" value="ECO:0007669"/>
    <property type="project" value="UniProtKB-UniRule"/>
</dbReference>
<dbReference type="GO" id="GO:0006355">
    <property type="term" value="P:regulation of DNA-templated transcription"/>
    <property type="evidence" value="ECO:0007669"/>
    <property type="project" value="UniProtKB-UniRule"/>
</dbReference>
<dbReference type="FunFam" id="1.10.10.200:FF:000002">
    <property type="entry name" value="Probable transcriptional regulatory protein CLM62_37755"/>
    <property type="match status" value="1"/>
</dbReference>
<dbReference type="FunFam" id="3.30.70.980:FF:000002">
    <property type="entry name" value="Probable transcriptional regulatory protein YebC"/>
    <property type="match status" value="1"/>
</dbReference>
<dbReference type="Gene3D" id="1.10.10.200">
    <property type="match status" value="1"/>
</dbReference>
<dbReference type="Gene3D" id="3.30.70.980">
    <property type="match status" value="2"/>
</dbReference>
<dbReference type="HAMAP" id="MF_00693">
    <property type="entry name" value="Transcrip_reg_TACO1"/>
    <property type="match status" value="1"/>
</dbReference>
<dbReference type="InterPro" id="IPR017856">
    <property type="entry name" value="Integrase-like_N"/>
</dbReference>
<dbReference type="InterPro" id="IPR048300">
    <property type="entry name" value="TACO1_YebC-like_2nd/3rd_dom"/>
</dbReference>
<dbReference type="InterPro" id="IPR049083">
    <property type="entry name" value="TACO1_YebC_N"/>
</dbReference>
<dbReference type="InterPro" id="IPR002876">
    <property type="entry name" value="Transcrip_reg_TACO1-like"/>
</dbReference>
<dbReference type="InterPro" id="IPR026564">
    <property type="entry name" value="Transcrip_reg_TACO1-like_dom3"/>
</dbReference>
<dbReference type="InterPro" id="IPR029072">
    <property type="entry name" value="YebC-like"/>
</dbReference>
<dbReference type="NCBIfam" id="NF001030">
    <property type="entry name" value="PRK00110.1"/>
    <property type="match status" value="1"/>
</dbReference>
<dbReference type="NCBIfam" id="NF009044">
    <property type="entry name" value="PRK12378.1"/>
    <property type="match status" value="1"/>
</dbReference>
<dbReference type="NCBIfam" id="TIGR01033">
    <property type="entry name" value="YebC/PmpR family DNA-binding transcriptional regulator"/>
    <property type="match status" value="1"/>
</dbReference>
<dbReference type="PANTHER" id="PTHR12532:SF6">
    <property type="entry name" value="TRANSCRIPTIONAL REGULATORY PROTEIN YEBC-RELATED"/>
    <property type="match status" value="1"/>
</dbReference>
<dbReference type="PANTHER" id="PTHR12532">
    <property type="entry name" value="TRANSLATIONAL ACTIVATOR OF CYTOCHROME C OXIDASE 1"/>
    <property type="match status" value="1"/>
</dbReference>
<dbReference type="Pfam" id="PF20772">
    <property type="entry name" value="TACO1_YebC_N"/>
    <property type="match status" value="1"/>
</dbReference>
<dbReference type="Pfam" id="PF01709">
    <property type="entry name" value="Transcrip_reg"/>
    <property type="match status" value="1"/>
</dbReference>
<dbReference type="SUPFAM" id="SSF75625">
    <property type="entry name" value="YebC-like"/>
    <property type="match status" value="1"/>
</dbReference>
<accession>B5EJL6</accession>
<sequence length="250" mass="27292">MSGHSKWSTIKFKKALKDAKRGKIFTRLIREITVAARAGGGDPASNSRLRLALDKAYGANMTKDTIERAIKRGTGELEGVDYEEVTYEGYGPGGVAILIETMTDNKVRTVAEVRHIFSKRGGNMGTAGSVAYQFKKLGLIVFPADADEDRILEAALEAGAEDVVNEGERIAVYTAPSDLHSVVLALEAAGLKPEESEMTMIPENTIEVSGEEAEKLLRLIDFLEENDDVQNVYANYDISDEEMARLEATS</sequence>